<comment type="function">
    <text evidence="1">Involved in unsaturated fatty acids biosynthesis. Catalyzes the dehydration of short chain beta-hydroxyacyl-ACPs and long chain saturated and unsaturated beta-hydroxyacyl-ACPs.</text>
</comment>
<comment type="catalytic activity">
    <reaction evidence="1">
        <text>a (3R)-hydroxyacyl-[ACP] = a (2E)-enoyl-[ACP] + H2O</text>
        <dbReference type="Rhea" id="RHEA:13097"/>
        <dbReference type="Rhea" id="RHEA-COMP:9925"/>
        <dbReference type="Rhea" id="RHEA-COMP:9945"/>
        <dbReference type="ChEBI" id="CHEBI:15377"/>
        <dbReference type="ChEBI" id="CHEBI:78784"/>
        <dbReference type="ChEBI" id="CHEBI:78827"/>
        <dbReference type="EC" id="4.2.1.59"/>
    </reaction>
</comment>
<comment type="subcellular location">
    <subcellularLocation>
        <location evidence="1">Cytoplasm</location>
    </subcellularLocation>
</comment>
<comment type="similarity">
    <text evidence="1">Belongs to the thioester dehydratase family. FabZ subfamily.</text>
</comment>
<comment type="sequence caution" evidence="2">
    <conflict type="erroneous initiation">
        <sequence resource="EMBL-CDS" id="AAT87616"/>
    </conflict>
</comment>
<protein>
    <recommendedName>
        <fullName evidence="1">3-hydroxyacyl-[acyl-carrier-protein] dehydratase FabZ</fullName>
        <ecNumber evidence="1">4.2.1.59</ecNumber>
    </recommendedName>
    <alternativeName>
        <fullName evidence="1">(3R)-hydroxymyristoyl-[acyl-carrier-protein] dehydratase</fullName>
        <shortName evidence="1">(3R)-hydroxymyristoyl-ACP dehydrase</shortName>
    </alternativeName>
    <alternativeName>
        <fullName evidence="1">Beta-hydroxyacyl-ACP dehydratase</fullName>
    </alternativeName>
</protein>
<dbReference type="EC" id="4.2.1.59" evidence="1"/>
<dbReference type="EMBL" id="CP000003">
    <property type="protein sequence ID" value="AAT87616.1"/>
    <property type="status" value="ALT_INIT"/>
    <property type="molecule type" value="Genomic_DNA"/>
</dbReference>
<dbReference type="SMR" id="Q5XAE7"/>
<dbReference type="KEGG" id="spa:M6_Spy1481"/>
<dbReference type="HOGENOM" id="CLU_078912_1_2_9"/>
<dbReference type="Proteomes" id="UP000001167">
    <property type="component" value="Chromosome"/>
</dbReference>
<dbReference type="GO" id="GO:0005737">
    <property type="term" value="C:cytoplasm"/>
    <property type="evidence" value="ECO:0007669"/>
    <property type="project" value="UniProtKB-SubCell"/>
</dbReference>
<dbReference type="GO" id="GO:0016020">
    <property type="term" value="C:membrane"/>
    <property type="evidence" value="ECO:0007669"/>
    <property type="project" value="GOC"/>
</dbReference>
<dbReference type="GO" id="GO:0019171">
    <property type="term" value="F:(3R)-hydroxyacyl-[acyl-carrier-protein] dehydratase activity"/>
    <property type="evidence" value="ECO:0007669"/>
    <property type="project" value="UniProtKB-EC"/>
</dbReference>
<dbReference type="GO" id="GO:0006633">
    <property type="term" value="P:fatty acid biosynthetic process"/>
    <property type="evidence" value="ECO:0007669"/>
    <property type="project" value="UniProtKB-UniRule"/>
</dbReference>
<dbReference type="GO" id="GO:0009245">
    <property type="term" value="P:lipid A biosynthetic process"/>
    <property type="evidence" value="ECO:0007669"/>
    <property type="project" value="UniProtKB-UniRule"/>
</dbReference>
<dbReference type="CDD" id="cd01288">
    <property type="entry name" value="FabZ"/>
    <property type="match status" value="1"/>
</dbReference>
<dbReference type="FunFam" id="3.10.129.10:FF:000001">
    <property type="entry name" value="3-hydroxyacyl-[acyl-carrier-protein] dehydratase FabZ"/>
    <property type="match status" value="1"/>
</dbReference>
<dbReference type="Gene3D" id="3.10.129.10">
    <property type="entry name" value="Hotdog Thioesterase"/>
    <property type="match status" value="1"/>
</dbReference>
<dbReference type="HAMAP" id="MF_00406">
    <property type="entry name" value="FabZ"/>
    <property type="match status" value="1"/>
</dbReference>
<dbReference type="InterPro" id="IPR013114">
    <property type="entry name" value="FabA_FabZ"/>
</dbReference>
<dbReference type="InterPro" id="IPR010084">
    <property type="entry name" value="FabZ"/>
</dbReference>
<dbReference type="InterPro" id="IPR029069">
    <property type="entry name" value="HotDog_dom_sf"/>
</dbReference>
<dbReference type="NCBIfam" id="TIGR01750">
    <property type="entry name" value="fabZ"/>
    <property type="match status" value="1"/>
</dbReference>
<dbReference type="NCBIfam" id="NF000582">
    <property type="entry name" value="PRK00006.1"/>
    <property type="match status" value="1"/>
</dbReference>
<dbReference type="PANTHER" id="PTHR30272">
    <property type="entry name" value="3-HYDROXYACYL-[ACYL-CARRIER-PROTEIN] DEHYDRATASE"/>
    <property type="match status" value="1"/>
</dbReference>
<dbReference type="PANTHER" id="PTHR30272:SF1">
    <property type="entry name" value="3-HYDROXYACYL-[ACYL-CARRIER-PROTEIN] DEHYDRATASE"/>
    <property type="match status" value="1"/>
</dbReference>
<dbReference type="Pfam" id="PF07977">
    <property type="entry name" value="FabA"/>
    <property type="match status" value="1"/>
</dbReference>
<dbReference type="SUPFAM" id="SSF54637">
    <property type="entry name" value="Thioesterase/thiol ester dehydrase-isomerase"/>
    <property type="match status" value="1"/>
</dbReference>
<sequence length="139" mass="15324">MDIREIQAALPHRYPMLLVDRVLEVSDDHIVAIKNVTINEPFFNGHFPHYPVMPGVLIMEALAQTAGVLELSKEENKGKLVFYAGMDKVKFKKQVVPGDQLVMTATFIKRRGTIAVVEARAEVDGKLAASGTLTFACGQ</sequence>
<organism>
    <name type="scientific">Streptococcus pyogenes serotype M6 (strain ATCC BAA-946 / MGAS10394)</name>
    <dbReference type="NCBI Taxonomy" id="286636"/>
    <lineage>
        <taxon>Bacteria</taxon>
        <taxon>Bacillati</taxon>
        <taxon>Bacillota</taxon>
        <taxon>Bacilli</taxon>
        <taxon>Lactobacillales</taxon>
        <taxon>Streptococcaceae</taxon>
        <taxon>Streptococcus</taxon>
    </lineage>
</organism>
<feature type="chain" id="PRO_0000091745" description="3-hydroxyacyl-[acyl-carrier-protein] dehydratase FabZ">
    <location>
        <begin position="1"/>
        <end position="139"/>
    </location>
</feature>
<feature type="active site" evidence="1">
    <location>
        <position position="46"/>
    </location>
</feature>
<accession>Q5XAE7</accession>
<keyword id="KW-0963">Cytoplasm</keyword>
<keyword id="KW-0441">Lipid A biosynthesis</keyword>
<keyword id="KW-0444">Lipid biosynthesis</keyword>
<keyword id="KW-0443">Lipid metabolism</keyword>
<keyword id="KW-0456">Lyase</keyword>
<gene>
    <name evidence="1" type="primary">fabZ</name>
    <name type="ordered locus">M6_Spy1481</name>
</gene>
<name>FABZ_STRP6</name>
<proteinExistence type="inferred from homology"/>
<reference key="1">
    <citation type="journal article" date="2004" name="J. Infect. Dis.">
        <title>Progress toward characterization of the group A Streptococcus metagenome: complete genome sequence of a macrolide-resistant serotype M6 strain.</title>
        <authorList>
            <person name="Banks D.J."/>
            <person name="Porcella S.F."/>
            <person name="Barbian K.D."/>
            <person name="Beres S.B."/>
            <person name="Philips L.E."/>
            <person name="Voyich J.M."/>
            <person name="DeLeo F.R."/>
            <person name="Martin J.M."/>
            <person name="Somerville G.A."/>
            <person name="Musser J.M."/>
        </authorList>
    </citation>
    <scope>NUCLEOTIDE SEQUENCE [LARGE SCALE GENOMIC DNA]</scope>
    <source>
        <strain>ATCC BAA-946 / MGAS10394</strain>
    </source>
</reference>
<evidence type="ECO:0000255" key="1">
    <source>
        <dbReference type="HAMAP-Rule" id="MF_00406"/>
    </source>
</evidence>
<evidence type="ECO:0000305" key="2"/>